<dbReference type="EMBL" id="BX936398">
    <property type="protein sequence ID" value="CAH19975.1"/>
    <property type="status" value="ALT_INIT"/>
    <property type="molecule type" value="Genomic_DNA"/>
</dbReference>
<dbReference type="RefSeq" id="WP_032466625.1">
    <property type="nucleotide sequence ID" value="NC_006155.1"/>
</dbReference>
<dbReference type="SMR" id="Q66EF8"/>
<dbReference type="KEGG" id="ypo:BZ17_1820"/>
<dbReference type="KEGG" id="yps:YPTB0735"/>
<dbReference type="PATRIC" id="fig|273123.14.peg.1929"/>
<dbReference type="Proteomes" id="UP000001011">
    <property type="component" value="Chromosome"/>
</dbReference>
<dbReference type="GO" id="GO:0003677">
    <property type="term" value="F:DNA binding"/>
    <property type="evidence" value="ECO:0007669"/>
    <property type="project" value="InterPro"/>
</dbReference>
<dbReference type="CDD" id="cd22359">
    <property type="entry name" value="SfsA-like_bacterial"/>
    <property type="match status" value="1"/>
</dbReference>
<dbReference type="FunFam" id="2.40.50.580:FF:000001">
    <property type="entry name" value="Sugar fermentation stimulation protein A"/>
    <property type="match status" value="1"/>
</dbReference>
<dbReference type="FunFam" id="3.40.1350.60:FF:000001">
    <property type="entry name" value="Sugar fermentation stimulation protein A"/>
    <property type="match status" value="1"/>
</dbReference>
<dbReference type="Gene3D" id="2.40.50.580">
    <property type="match status" value="1"/>
</dbReference>
<dbReference type="Gene3D" id="3.40.1350.60">
    <property type="match status" value="1"/>
</dbReference>
<dbReference type="HAMAP" id="MF_00095">
    <property type="entry name" value="SfsA"/>
    <property type="match status" value="1"/>
</dbReference>
<dbReference type="InterPro" id="IPR005224">
    <property type="entry name" value="SfsA"/>
</dbReference>
<dbReference type="InterPro" id="IPR040452">
    <property type="entry name" value="SfsA_C"/>
</dbReference>
<dbReference type="InterPro" id="IPR041465">
    <property type="entry name" value="SfsA_N"/>
</dbReference>
<dbReference type="NCBIfam" id="TIGR00230">
    <property type="entry name" value="sfsA"/>
    <property type="match status" value="1"/>
</dbReference>
<dbReference type="PANTHER" id="PTHR30545">
    <property type="entry name" value="SUGAR FERMENTATION STIMULATION PROTEIN A"/>
    <property type="match status" value="1"/>
</dbReference>
<dbReference type="PANTHER" id="PTHR30545:SF2">
    <property type="entry name" value="SUGAR FERMENTATION STIMULATION PROTEIN A"/>
    <property type="match status" value="1"/>
</dbReference>
<dbReference type="Pfam" id="PF03749">
    <property type="entry name" value="SfsA"/>
    <property type="match status" value="1"/>
</dbReference>
<dbReference type="Pfam" id="PF17746">
    <property type="entry name" value="SfsA_N"/>
    <property type="match status" value="1"/>
</dbReference>
<sequence>MLQFTPPLQPATLILRYKRFLADIVTPAGEALTIHCANTGAMTGCATPGDTIWYSTSDNPKRKYPQSWELTQTQTGDWICVNTMRANELVNLAIEKNQIAELSGYNFVRKEVKYGEENSRIDLLLQAEDRRDCYIEVKSVTLLQQQCGYFPDAVTLRGQKHLRELQNRVVNGHRAVLFFAVLHTGIKQVAPARHIDRRYAELLVQAQQAGVEVICYGFQLSPDGIELNTRLPLLQDEMLSSENAE</sequence>
<proteinExistence type="inferred from homology"/>
<gene>
    <name evidence="1" type="primary">sfsA</name>
    <name type="ordered locus">YPTB0735</name>
</gene>
<feature type="chain" id="PRO_0000152320" description="Sugar fermentation stimulation protein homolog">
    <location>
        <begin position="1"/>
        <end position="245"/>
    </location>
</feature>
<reference key="1">
    <citation type="journal article" date="2004" name="Proc. Natl. Acad. Sci. U.S.A.">
        <title>Insights into the evolution of Yersinia pestis through whole-genome comparison with Yersinia pseudotuberculosis.</title>
        <authorList>
            <person name="Chain P.S.G."/>
            <person name="Carniel E."/>
            <person name="Larimer F.W."/>
            <person name="Lamerdin J."/>
            <person name="Stoutland P.O."/>
            <person name="Regala W.M."/>
            <person name="Georgescu A.M."/>
            <person name="Vergez L.M."/>
            <person name="Land M.L."/>
            <person name="Motin V.L."/>
            <person name="Brubaker R.R."/>
            <person name="Fowler J."/>
            <person name="Hinnebusch J."/>
            <person name="Marceau M."/>
            <person name="Medigue C."/>
            <person name="Simonet M."/>
            <person name="Chenal-Francisque V."/>
            <person name="Souza B."/>
            <person name="Dacheux D."/>
            <person name="Elliott J.M."/>
            <person name="Derbise A."/>
            <person name="Hauser L.J."/>
            <person name="Garcia E."/>
        </authorList>
    </citation>
    <scope>NUCLEOTIDE SEQUENCE [LARGE SCALE GENOMIC DNA]</scope>
    <source>
        <strain>IP32953</strain>
    </source>
</reference>
<evidence type="ECO:0000255" key="1">
    <source>
        <dbReference type="HAMAP-Rule" id="MF_00095"/>
    </source>
</evidence>
<evidence type="ECO:0000305" key="2"/>
<accession>Q66EF8</accession>
<protein>
    <recommendedName>
        <fullName evidence="1">Sugar fermentation stimulation protein homolog</fullName>
    </recommendedName>
</protein>
<comment type="similarity">
    <text evidence="1">Belongs to the SfsA family.</text>
</comment>
<comment type="sequence caution" evidence="2">
    <conflict type="erroneous initiation">
        <sequence resource="EMBL-CDS" id="CAH19975"/>
    </conflict>
</comment>
<organism>
    <name type="scientific">Yersinia pseudotuberculosis serotype I (strain IP32953)</name>
    <dbReference type="NCBI Taxonomy" id="273123"/>
    <lineage>
        <taxon>Bacteria</taxon>
        <taxon>Pseudomonadati</taxon>
        <taxon>Pseudomonadota</taxon>
        <taxon>Gammaproteobacteria</taxon>
        <taxon>Enterobacterales</taxon>
        <taxon>Yersiniaceae</taxon>
        <taxon>Yersinia</taxon>
    </lineage>
</organism>
<name>SFSA_YERPS</name>